<organism>
    <name type="scientific">Human herpesvirus 6B (strain Z29)</name>
    <name type="common">HHV-6 variant B</name>
    <name type="synonym">Human B lymphotropic virus</name>
    <dbReference type="NCBI Taxonomy" id="36351"/>
    <lineage>
        <taxon>Viruses</taxon>
        <taxon>Duplodnaviria</taxon>
        <taxon>Heunggongvirae</taxon>
        <taxon>Peploviricota</taxon>
        <taxon>Herviviricetes</taxon>
        <taxon>Herpesvirales</taxon>
        <taxon>Orthoherpesviridae</taxon>
        <taxon>Betaherpesvirinae</taxon>
        <taxon>Roseolovirus</taxon>
        <taxon>Roseolovirus humanbeta6b</taxon>
        <taxon>Human herpesvirus 6B</taxon>
    </lineage>
</organism>
<accession>P52548</accession>
<accession>Q9IBR8</accession>
<comment type="similarity">
    <text evidence="1">Belongs to the herpesviridae UL79 family.</text>
</comment>
<gene>
    <name type="primary">U52</name>
    <name type="synonym">KA13L</name>
</gene>
<feature type="chain" id="PRO_0000116223" description="Protein U52">
    <location>
        <begin position="1"/>
        <end position="258"/>
    </location>
</feature>
<organismHost>
    <name type="scientific">Homo sapiens</name>
    <name type="common">Human</name>
    <dbReference type="NCBI Taxonomy" id="9606"/>
</organismHost>
<dbReference type="EMBL" id="AF157706">
    <property type="protein sequence ID" value="AAD49655.1"/>
    <property type="molecule type" value="Genomic_DNA"/>
</dbReference>
<dbReference type="RefSeq" id="NP_050233.1">
    <property type="nucleotide sequence ID" value="NC_000898.1"/>
</dbReference>
<dbReference type="DNASU" id="1497054"/>
<dbReference type="GeneID" id="1497054"/>
<dbReference type="KEGG" id="vg:1497054"/>
<dbReference type="Proteomes" id="UP000006930">
    <property type="component" value="Segment"/>
</dbReference>
<dbReference type="InterPro" id="IPR004290">
    <property type="entry name" value="Herpes_UL79"/>
</dbReference>
<dbReference type="Pfam" id="PF03049">
    <property type="entry name" value="Herpes_UL79"/>
    <property type="match status" value="1"/>
</dbReference>
<sequence>MTQIGQYIKLNDAVPNLILHITTKLLRNENLTSFKQEELLLIQHVCTSMLSHGIKILLLRESLYNSGIGDIVILNRKISNNYWFRLFSILKQHSDAELLRHMFNESHSAYISKKLHYSGNVSHIINFLFMDEFGLSLKIPEEIICEGNIVFSVGAIYNHRLLKICRFFNRFWGDQEREPAVRLICKHLWFAYLIMFGKFEISTLAYNQQRAEHKAGLFSFLQNDFKVFCGMSENPQLLDSSAIFDLTGISAEDLFSYE</sequence>
<protein>
    <recommendedName>
        <fullName>Protein U52</fullName>
    </recommendedName>
</protein>
<proteinExistence type="inferred from homology"/>
<keyword id="KW-1185">Reference proteome</keyword>
<reference key="1">
    <citation type="journal article" date="1999" name="J. Virol.">
        <title>Human herpesvirus 6B genome sequence: coding content and comparison with human herpesvirus 6A.</title>
        <authorList>
            <person name="Dominguez G."/>
            <person name="Dambaugh T.R."/>
            <person name="Stamey F.R."/>
            <person name="Dewhurst S."/>
            <person name="Inoue N."/>
            <person name="Pellett P.E."/>
        </authorList>
    </citation>
    <scope>NUCLEOTIDE SEQUENCE [GENOMIC DNA]</scope>
    <scope>SEQUENCE REVISION TO 184-185</scope>
</reference>
<reference key="2">
    <citation type="journal article" date="1995" name="J. Virol.">
        <title>Intragenomic linear amplification of human herpesvirus 6B oriLyt suggests acquisition of oriLyt by transposition.</title>
        <authorList>
            <person name="Stamey F.R."/>
            <person name="Dominguez G."/>
            <person name="Black J.B."/>
            <person name="Dambaugh T.R."/>
            <person name="Pellett P.E."/>
        </authorList>
    </citation>
    <scope>NUCLEOTIDE SEQUENCE [GENOMIC DNA] OF 183-258</scope>
</reference>
<evidence type="ECO:0000305" key="1"/>
<name>UL79_HHV6Z</name>